<organism>
    <name type="scientific">Vibrio atlanticus (strain LGP32)</name>
    <name type="common">Vibrio splendidus (strain Mel32)</name>
    <dbReference type="NCBI Taxonomy" id="575788"/>
    <lineage>
        <taxon>Bacteria</taxon>
        <taxon>Pseudomonadati</taxon>
        <taxon>Pseudomonadota</taxon>
        <taxon>Gammaproteobacteria</taxon>
        <taxon>Vibrionales</taxon>
        <taxon>Vibrionaceae</taxon>
        <taxon>Vibrio</taxon>
    </lineage>
</organism>
<evidence type="ECO:0000255" key="1">
    <source>
        <dbReference type="HAMAP-Rule" id="MF_00540"/>
    </source>
</evidence>
<reference key="1">
    <citation type="submission" date="2009-02" db="EMBL/GenBank/DDBJ databases">
        <title>Vibrio splendidus str. LGP32 complete genome.</title>
        <authorList>
            <person name="Mazel D."/>
            <person name="Le Roux F."/>
        </authorList>
    </citation>
    <scope>NUCLEOTIDE SEQUENCE [LARGE SCALE GENOMIC DNA]</scope>
    <source>
        <strain>LGP32</strain>
    </source>
</reference>
<dbReference type="EC" id="3.5.4.4" evidence="1"/>
<dbReference type="EMBL" id="FM954973">
    <property type="protein sequence ID" value="CAV25306.1"/>
    <property type="molecule type" value="Genomic_DNA"/>
</dbReference>
<dbReference type="SMR" id="B7VQ44"/>
<dbReference type="STRING" id="575788.VS_II0073"/>
<dbReference type="KEGG" id="vsp:VS_II0073"/>
<dbReference type="PATRIC" id="fig|575788.5.peg.71"/>
<dbReference type="eggNOG" id="COG1816">
    <property type="taxonomic scope" value="Bacteria"/>
</dbReference>
<dbReference type="HOGENOM" id="CLU_039228_0_0_6"/>
<dbReference type="Proteomes" id="UP000009100">
    <property type="component" value="Chromosome 2"/>
</dbReference>
<dbReference type="GO" id="GO:0005829">
    <property type="term" value="C:cytosol"/>
    <property type="evidence" value="ECO:0007669"/>
    <property type="project" value="TreeGrafter"/>
</dbReference>
<dbReference type="GO" id="GO:0046936">
    <property type="term" value="F:2'-deoxyadenosine deaminase activity"/>
    <property type="evidence" value="ECO:0007669"/>
    <property type="project" value="RHEA"/>
</dbReference>
<dbReference type="GO" id="GO:0004000">
    <property type="term" value="F:adenosine deaminase activity"/>
    <property type="evidence" value="ECO:0007669"/>
    <property type="project" value="UniProtKB-UniRule"/>
</dbReference>
<dbReference type="GO" id="GO:0008270">
    <property type="term" value="F:zinc ion binding"/>
    <property type="evidence" value="ECO:0007669"/>
    <property type="project" value="UniProtKB-UniRule"/>
</dbReference>
<dbReference type="GO" id="GO:0006154">
    <property type="term" value="P:adenosine catabolic process"/>
    <property type="evidence" value="ECO:0007669"/>
    <property type="project" value="TreeGrafter"/>
</dbReference>
<dbReference type="GO" id="GO:0043103">
    <property type="term" value="P:hypoxanthine salvage"/>
    <property type="evidence" value="ECO:0007669"/>
    <property type="project" value="TreeGrafter"/>
</dbReference>
<dbReference type="GO" id="GO:0046103">
    <property type="term" value="P:inosine biosynthetic process"/>
    <property type="evidence" value="ECO:0007669"/>
    <property type="project" value="TreeGrafter"/>
</dbReference>
<dbReference type="GO" id="GO:0009117">
    <property type="term" value="P:nucleotide metabolic process"/>
    <property type="evidence" value="ECO:0007669"/>
    <property type="project" value="UniProtKB-KW"/>
</dbReference>
<dbReference type="GO" id="GO:0009168">
    <property type="term" value="P:purine ribonucleoside monophosphate biosynthetic process"/>
    <property type="evidence" value="ECO:0007669"/>
    <property type="project" value="UniProtKB-UniRule"/>
</dbReference>
<dbReference type="CDD" id="cd01320">
    <property type="entry name" value="ADA"/>
    <property type="match status" value="1"/>
</dbReference>
<dbReference type="Gene3D" id="3.20.20.140">
    <property type="entry name" value="Metal-dependent hydrolases"/>
    <property type="match status" value="1"/>
</dbReference>
<dbReference type="HAMAP" id="MF_00540">
    <property type="entry name" value="A_deaminase"/>
    <property type="match status" value="1"/>
</dbReference>
<dbReference type="InterPro" id="IPR028893">
    <property type="entry name" value="A_deaminase"/>
</dbReference>
<dbReference type="InterPro" id="IPR001365">
    <property type="entry name" value="A_deaminase_dom"/>
</dbReference>
<dbReference type="InterPro" id="IPR006330">
    <property type="entry name" value="Ado/ade_deaminase"/>
</dbReference>
<dbReference type="InterPro" id="IPR032466">
    <property type="entry name" value="Metal_Hydrolase"/>
</dbReference>
<dbReference type="NCBIfam" id="TIGR01430">
    <property type="entry name" value="aden_deam"/>
    <property type="match status" value="1"/>
</dbReference>
<dbReference type="PANTHER" id="PTHR11409">
    <property type="entry name" value="ADENOSINE DEAMINASE"/>
    <property type="match status" value="1"/>
</dbReference>
<dbReference type="PANTHER" id="PTHR11409:SF43">
    <property type="entry name" value="ADENOSINE DEAMINASE"/>
    <property type="match status" value="1"/>
</dbReference>
<dbReference type="Pfam" id="PF00962">
    <property type="entry name" value="A_deaminase"/>
    <property type="match status" value="1"/>
</dbReference>
<dbReference type="SUPFAM" id="SSF51556">
    <property type="entry name" value="Metallo-dependent hydrolases"/>
    <property type="match status" value="1"/>
</dbReference>
<name>ADD_VIBA3</name>
<keyword id="KW-0378">Hydrolase</keyword>
<keyword id="KW-0479">Metal-binding</keyword>
<keyword id="KW-0546">Nucleotide metabolism</keyword>
<keyword id="KW-0862">Zinc</keyword>
<feature type="chain" id="PRO_1000146579" description="Adenosine deaminase">
    <location>
        <begin position="1"/>
        <end position="332"/>
    </location>
</feature>
<feature type="active site" description="Proton donor" evidence="1">
    <location>
        <position position="199"/>
    </location>
</feature>
<feature type="binding site" evidence="1">
    <location>
        <position position="12"/>
    </location>
    <ligand>
        <name>Zn(2+)</name>
        <dbReference type="ChEBI" id="CHEBI:29105"/>
        <note>catalytic</note>
    </ligand>
</feature>
<feature type="binding site" evidence="1">
    <location>
        <position position="14"/>
    </location>
    <ligand>
        <name>substrate</name>
    </ligand>
</feature>
<feature type="binding site" evidence="1">
    <location>
        <position position="14"/>
    </location>
    <ligand>
        <name>Zn(2+)</name>
        <dbReference type="ChEBI" id="CHEBI:29105"/>
        <note>catalytic</note>
    </ligand>
</feature>
<feature type="binding site" evidence="1">
    <location>
        <position position="16"/>
    </location>
    <ligand>
        <name>substrate</name>
    </ligand>
</feature>
<feature type="binding site" evidence="1">
    <location>
        <position position="169"/>
    </location>
    <ligand>
        <name>substrate</name>
    </ligand>
</feature>
<feature type="binding site" evidence="1">
    <location>
        <position position="196"/>
    </location>
    <ligand>
        <name>Zn(2+)</name>
        <dbReference type="ChEBI" id="CHEBI:29105"/>
        <note>catalytic</note>
    </ligand>
</feature>
<feature type="binding site" evidence="1">
    <location>
        <position position="277"/>
    </location>
    <ligand>
        <name>Zn(2+)</name>
        <dbReference type="ChEBI" id="CHEBI:29105"/>
        <note>catalytic</note>
    </ligand>
</feature>
<feature type="site" description="Important for catalytic activity" evidence="1">
    <location>
        <position position="220"/>
    </location>
</feature>
<protein>
    <recommendedName>
        <fullName evidence="1">Adenosine deaminase</fullName>
        <ecNumber evidence="1">3.5.4.4</ecNumber>
    </recommendedName>
    <alternativeName>
        <fullName evidence="1">Adenosine aminohydrolase</fullName>
    </alternativeName>
</protein>
<gene>
    <name evidence="1" type="primary">add</name>
    <name type="ordered locus">VS_II0073</name>
</gene>
<comment type="function">
    <text evidence="1">Catalyzes the hydrolytic deamination of adenosine and 2-deoxyadenosine.</text>
</comment>
<comment type="catalytic activity">
    <reaction evidence="1">
        <text>adenosine + H2O + H(+) = inosine + NH4(+)</text>
        <dbReference type="Rhea" id="RHEA:24408"/>
        <dbReference type="ChEBI" id="CHEBI:15377"/>
        <dbReference type="ChEBI" id="CHEBI:15378"/>
        <dbReference type="ChEBI" id="CHEBI:16335"/>
        <dbReference type="ChEBI" id="CHEBI:17596"/>
        <dbReference type="ChEBI" id="CHEBI:28938"/>
        <dbReference type="EC" id="3.5.4.4"/>
    </reaction>
    <physiologicalReaction direction="left-to-right" evidence="1">
        <dbReference type="Rhea" id="RHEA:24409"/>
    </physiologicalReaction>
</comment>
<comment type="catalytic activity">
    <reaction evidence="1">
        <text>2'-deoxyadenosine + H2O + H(+) = 2'-deoxyinosine + NH4(+)</text>
        <dbReference type="Rhea" id="RHEA:28190"/>
        <dbReference type="ChEBI" id="CHEBI:15377"/>
        <dbReference type="ChEBI" id="CHEBI:15378"/>
        <dbReference type="ChEBI" id="CHEBI:17256"/>
        <dbReference type="ChEBI" id="CHEBI:28938"/>
        <dbReference type="ChEBI" id="CHEBI:28997"/>
        <dbReference type="EC" id="3.5.4.4"/>
    </reaction>
    <physiologicalReaction direction="left-to-right" evidence="1">
        <dbReference type="Rhea" id="RHEA:28191"/>
    </physiologicalReaction>
</comment>
<comment type="cofactor">
    <cofactor evidence="1">
        <name>Zn(2+)</name>
        <dbReference type="ChEBI" id="CHEBI:29105"/>
    </cofactor>
    <text evidence="1">Binds 1 zinc ion per subunit.</text>
</comment>
<comment type="similarity">
    <text evidence="1">Belongs to the metallo-dependent hydrolases superfamily. Adenosine and AMP deaminases family. Adenosine deaminase subfamily.</text>
</comment>
<accession>B7VQ44</accession>
<sequence length="332" mass="37431">MDFLALPKIDLHCHLDGSVRPDTIIDLAKQYNIELPEDRDAVVQSLTVPEDCKNLDEYLACFSLPLQVMQTEEAIERISFELYEDAALENVKYLEVRFAPILHVNKGLSLDTIIASAVKGMKRAEEKYDIKGNYIMSVLRMFPKDSIKDVIDAGQPYLGKGVVAFDIAGGEKPGFCAEFPEYTQYALEKGYRITVHAGEQWHGQNVYDAVTMLDAERIGHGVHIQGNEDAYNIVKEKQVALETCPTSNVQTKCIHQFSDHPIAEFKKDGIVVTINTDNRTVSNTTMTNEVKRVCETFGLTKEDYVEIYKYSVESAFASDEVKQHLMGFVEQI</sequence>
<proteinExistence type="inferred from homology"/>